<evidence type="ECO:0000255" key="1">
    <source>
        <dbReference type="HAMAP-Rule" id="MF_00009"/>
    </source>
</evidence>
<keyword id="KW-0963">Cytoplasm</keyword>
<keyword id="KW-0255">Endonuclease</keyword>
<keyword id="KW-0378">Hydrolase</keyword>
<keyword id="KW-0479">Metal-binding</keyword>
<keyword id="KW-0540">Nuclease</keyword>
<keyword id="KW-0690">Ribosome biogenesis</keyword>
<keyword id="KW-0698">rRNA processing</keyword>
<keyword id="KW-0862">Zinc</keyword>
<comment type="function">
    <text evidence="1">Single strand-specific metallo-endoribonuclease involved in late-stage 70S ribosome quality control and in maturation of the 3' terminus of the 16S rRNA.</text>
</comment>
<comment type="cofactor">
    <cofactor evidence="1">
        <name>Zn(2+)</name>
        <dbReference type="ChEBI" id="CHEBI:29105"/>
    </cofactor>
    <text evidence="1">Binds 1 zinc ion.</text>
</comment>
<comment type="subcellular location">
    <subcellularLocation>
        <location evidence="1">Cytoplasm</location>
    </subcellularLocation>
</comment>
<comment type="similarity">
    <text evidence="1">Belongs to the endoribonuclease YbeY family.</text>
</comment>
<organism>
    <name type="scientific">Francisella tularensis subsp. mediasiatica (strain FSC147)</name>
    <dbReference type="NCBI Taxonomy" id="441952"/>
    <lineage>
        <taxon>Bacteria</taxon>
        <taxon>Pseudomonadati</taxon>
        <taxon>Pseudomonadota</taxon>
        <taxon>Gammaproteobacteria</taxon>
        <taxon>Thiotrichales</taxon>
        <taxon>Francisellaceae</taxon>
        <taxon>Francisella</taxon>
    </lineage>
</organism>
<reference key="1">
    <citation type="journal article" date="2009" name="PLoS Pathog.">
        <title>Molecular evolutionary consequences of niche restriction in Francisella tularensis, a facultative intracellular pathogen.</title>
        <authorList>
            <person name="Larsson P."/>
            <person name="Elfsmark D."/>
            <person name="Svensson K."/>
            <person name="Wikstroem P."/>
            <person name="Forsman M."/>
            <person name="Brettin T."/>
            <person name="Keim P."/>
            <person name="Johansson A."/>
        </authorList>
    </citation>
    <scope>NUCLEOTIDE SEQUENCE [LARGE SCALE GENOMIC DNA]</scope>
    <source>
        <strain>FSC147</strain>
    </source>
</reference>
<proteinExistence type="inferred from homology"/>
<sequence>MDNLNINFINDDEHPIPSQDLLLKCLQLVADKHHISHAEVNLNIVSNDEIQQINKQFRNKDKPTNIISFEFEKPQGLPDDIANDFLGDIVIAPAVLENEAKEQNKELNDHWQHIFIHGLLHLLGYDHQGDQEAEVMENLEIQLLAQLGIANPYIEQEDQNGR</sequence>
<feature type="chain" id="PRO_1000089179" description="Endoribonuclease YbeY">
    <location>
        <begin position="1"/>
        <end position="162"/>
    </location>
</feature>
<feature type="binding site" evidence="1">
    <location>
        <position position="117"/>
    </location>
    <ligand>
        <name>Zn(2+)</name>
        <dbReference type="ChEBI" id="CHEBI:29105"/>
        <note>catalytic</note>
    </ligand>
</feature>
<feature type="binding site" evidence="1">
    <location>
        <position position="121"/>
    </location>
    <ligand>
        <name>Zn(2+)</name>
        <dbReference type="ChEBI" id="CHEBI:29105"/>
        <note>catalytic</note>
    </ligand>
</feature>
<feature type="binding site" evidence="1">
    <location>
        <position position="127"/>
    </location>
    <ligand>
        <name>Zn(2+)</name>
        <dbReference type="ChEBI" id="CHEBI:29105"/>
        <note>catalytic</note>
    </ligand>
</feature>
<dbReference type="EC" id="3.1.-.-" evidence="1"/>
<dbReference type="EMBL" id="CP000915">
    <property type="protein sequence ID" value="ACD30670.1"/>
    <property type="molecule type" value="Genomic_DNA"/>
</dbReference>
<dbReference type="SMR" id="B2SG11"/>
<dbReference type="KEGG" id="ftm:FTM_0691"/>
<dbReference type="HOGENOM" id="CLU_106710_3_3_6"/>
<dbReference type="GO" id="GO:0005737">
    <property type="term" value="C:cytoplasm"/>
    <property type="evidence" value="ECO:0007669"/>
    <property type="project" value="UniProtKB-SubCell"/>
</dbReference>
<dbReference type="GO" id="GO:0004222">
    <property type="term" value="F:metalloendopeptidase activity"/>
    <property type="evidence" value="ECO:0007669"/>
    <property type="project" value="InterPro"/>
</dbReference>
<dbReference type="GO" id="GO:0004521">
    <property type="term" value="F:RNA endonuclease activity"/>
    <property type="evidence" value="ECO:0007669"/>
    <property type="project" value="UniProtKB-UniRule"/>
</dbReference>
<dbReference type="GO" id="GO:0008270">
    <property type="term" value="F:zinc ion binding"/>
    <property type="evidence" value="ECO:0007669"/>
    <property type="project" value="UniProtKB-UniRule"/>
</dbReference>
<dbReference type="GO" id="GO:0006364">
    <property type="term" value="P:rRNA processing"/>
    <property type="evidence" value="ECO:0007669"/>
    <property type="project" value="UniProtKB-UniRule"/>
</dbReference>
<dbReference type="Gene3D" id="3.40.390.30">
    <property type="entry name" value="Metalloproteases ('zincins'), catalytic domain"/>
    <property type="match status" value="1"/>
</dbReference>
<dbReference type="HAMAP" id="MF_00009">
    <property type="entry name" value="Endoribonucl_YbeY"/>
    <property type="match status" value="1"/>
</dbReference>
<dbReference type="InterPro" id="IPR023091">
    <property type="entry name" value="MetalPrtase_cat_dom_sf_prd"/>
</dbReference>
<dbReference type="InterPro" id="IPR002036">
    <property type="entry name" value="YbeY"/>
</dbReference>
<dbReference type="InterPro" id="IPR020549">
    <property type="entry name" value="YbeY_CS"/>
</dbReference>
<dbReference type="NCBIfam" id="TIGR00043">
    <property type="entry name" value="rRNA maturation RNase YbeY"/>
    <property type="match status" value="1"/>
</dbReference>
<dbReference type="PANTHER" id="PTHR46986">
    <property type="entry name" value="ENDORIBONUCLEASE YBEY, CHLOROPLASTIC"/>
    <property type="match status" value="1"/>
</dbReference>
<dbReference type="PANTHER" id="PTHR46986:SF1">
    <property type="entry name" value="ENDORIBONUCLEASE YBEY, CHLOROPLASTIC"/>
    <property type="match status" value="1"/>
</dbReference>
<dbReference type="Pfam" id="PF02130">
    <property type="entry name" value="YbeY"/>
    <property type="match status" value="1"/>
</dbReference>
<dbReference type="SUPFAM" id="SSF55486">
    <property type="entry name" value="Metalloproteases ('zincins'), catalytic domain"/>
    <property type="match status" value="1"/>
</dbReference>
<dbReference type="PROSITE" id="PS01306">
    <property type="entry name" value="UPF0054"/>
    <property type="match status" value="1"/>
</dbReference>
<name>YBEY_FRATM</name>
<accession>B2SG11</accession>
<gene>
    <name evidence="1" type="primary">ybeY</name>
    <name type="ordered locus">FTM_0691</name>
</gene>
<protein>
    <recommendedName>
        <fullName evidence="1">Endoribonuclease YbeY</fullName>
        <ecNumber evidence="1">3.1.-.-</ecNumber>
    </recommendedName>
</protein>